<reference key="1">
    <citation type="journal article" date="2006" name="Transgenic Res.">
        <title>Efficient and stable transformation of Lactuca sativa L. cv. Cisco (lettuce) plastids.</title>
        <authorList>
            <person name="Kanamoto H."/>
            <person name="Yamashita A."/>
            <person name="Asao H."/>
            <person name="Okumura S."/>
            <person name="Takase H."/>
            <person name="Hattori M."/>
            <person name="Yokota A."/>
            <person name="Tomizawa K."/>
        </authorList>
    </citation>
    <scope>NUCLEOTIDE SEQUENCE [LARGE SCALE GENOMIC DNA]</scope>
    <source>
        <strain>cv. Cisco</strain>
    </source>
</reference>
<reference key="2">
    <citation type="submission" date="2006-01" db="EMBL/GenBank/DDBJ databases">
        <title>A comparison of the first two published chloroplast genomes in Asteraceae: Lactuca and Helianthus.</title>
        <authorList>
            <person name="Timme R.E."/>
            <person name="Kuehl J.V."/>
            <person name="Boore J.L."/>
            <person name="Jansen R.K."/>
        </authorList>
    </citation>
    <scope>NUCLEOTIDE SEQUENCE [LARGE SCALE GENOMIC DNA]</scope>
    <source>
        <strain>cv. Salinas</strain>
    </source>
</reference>
<organism>
    <name type="scientific">Lactuca sativa</name>
    <name type="common">Garden lettuce</name>
    <dbReference type="NCBI Taxonomy" id="4236"/>
    <lineage>
        <taxon>Eukaryota</taxon>
        <taxon>Viridiplantae</taxon>
        <taxon>Streptophyta</taxon>
        <taxon>Embryophyta</taxon>
        <taxon>Tracheophyta</taxon>
        <taxon>Spermatophyta</taxon>
        <taxon>Magnoliopsida</taxon>
        <taxon>eudicotyledons</taxon>
        <taxon>Gunneridae</taxon>
        <taxon>Pentapetalae</taxon>
        <taxon>asterids</taxon>
        <taxon>campanulids</taxon>
        <taxon>Asterales</taxon>
        <taxon>Asteraceae</taxon>
        <taxon>Cichorioideae</taxon>
        <taxon>Cichorieae</taxon>
        <taxon>Lactucinae</taxon>
        <taxon>Lactuca</taxon>
    </lineage>
</organism>
<dbReference type="EMBL" id="AP007232">
    <property type="protein sequence ID" value="BAE47576.1"/>
    <property type="molecule type" value="Genomic_DNA"/>
</dbReference>
<dbReference type="EMBL" id="DQ383816">
    <property type="protein sequence ID" value="ABD47215.2"/>
    <property type="molecule type" value="Genomic_DNA"/>
</dbReference>
<dbReference type="RefSeq" id="YP_398311.1">
    <property type="nucleotide sequence ID" value="NC_007578.1"/>
</dbReference>
<dbReference type="SMR" id="Q332Z6"/>
<dbReference type="GeneID" id="3772849"/>
<dbReference type="KEGG" id="lsv:3772849"/>
<dbReference type="OrthoDB" id="407221at2759"/>
<dbReference type="GO" id="GO:0009507">
    <property type="term" value="C:chloroplast"/>
    <property type="evidence" value="ECO:0007669"/>
    <property type="project" value="UniProtKB-SubCell"/>
</dbReference>
<dbReference type="GO" id="GO:1990904">
    <property type="term" value="C:ribonucleoprotein complex"/>
    <property type="evidence" value="ECO:0007669"/>
    <property type="project" value="UniProtKB-KW"/>
</dbReference>
<dbReference type="GO" id="GO:0005840">
    <property type="term" value="C:ribosome"/>
    <property type="evidence" value="ECO:0007669"/>
    <property type="project" value="UniProtKB-KW"/>
</dbReference>
<dbReference type="GO" id="GO:0003735">
    <property type="term" value="F:structural constituent of ribosome"/>
    <property type="evidence" value="ECO:0007669"/>
    <property type="project" value="InterPro"/>
</dbReference>
<dbReference type="GO" id="GO:0006412">
    <property type="term" value="P:translation"/>
    <property type="evidence" value="ECO:0007669"/>
    <property type="project" value="UniProtKB-UniRule"/>
</dbReference>
<dbReference type="FunFam" id="3.30.1320.10:FF:000003">
    <property type="entry name" value="30S ribosomal protein S16, chloroplastic"/>
    <property type="match status" value="1"/>
</dbReference>
<dbReference type="Gene3D" id="3.30.1320.10">
    <property type="match status" value="1"/>
</dbReference>
<dbReference type="HAMAP" id="MF_00385">
    <property type="entry name" value="Ribosomal_bS16"/>
    <property type="match status" value="1"/>
</dbReference>
<dbReference type="InterPro" id="IPR000307">
    <property type="entry name" value="Ribosomal_bS16"/>
</dbReference>
<dbReference type="InterPro" id="IPR020592">
    <property type="entry name" value="Ribosomal_bS16_CS"/>
</dbReference>
<dbReference type="InterPro" id="IPR023803">
    <property type="entry name" value="Ribosomal_bS16_dom_sf"/>
</dbReference>
<dbReference type="NCBIfam" id="TIGR00002">
    <property type="entry name" value="S16"/>
    <property type="match status" value="1"/>
</dbReference>
<dbReference type="PANTHER" id="PTHR12919">
    <property type="entry name" value="30S RIBOSOMAL PROTEIN S16"/>
    <property type="match status" value="1"/>
</dbReference>
<dbReference type="PANTHER" id="PTHR12919:SF20">
    <property type="entry name" value="SMALL RIBOSOMAL SUBUNIT PROTEIN BS16M"/>
    <property type="match status" value="1"/>
</dbReference>
<dbReference type="Pfam" id="PF00886">
    <property type="entry name" value="Ribosomal_S16"/>
    <property type="match status" value="1"/>
</dbReference>
<dbReference type="SUPFAM" id="SSF54565">
    <property type="entry name" value="Ribosomal protein S16"/>
    <property type="match status" value="1"/>
</dbReference>
<dbReference type="PROSITE" id="PS00732">
    <property type="entry name" value="RIBOSOMAL_S16"/>
    <property type="match status" value="1"/>
</dbReference>
<sequence length="88" mass="10299">MVKLRLKRCGRKQRAVYRIVAIDVRSRREGRDLRKVGFYDPIKNQTYLNVPAILYFLEKGAQPTGTVQDILKKAEVFKELCPNQTKFN</sequence>
<proteinExistence type="inferred from homology"/>
<geneLocation type="chloroplast"/>
<keyword id="KW-0150">Chloroplast</keyword>
<keyword id="KW-0934">Plastid</keyword>
<keyword id="KW-0687">Ribonucleoprotein</keyword>
<keyword id="KW-0689">Ribosomal protein</keyword>
<comment type="subcellular location">
    <subcellularLocation>
        <location>Plastid</location>
        <location>Chloroplast</location>
    </subcellularLocation>
</comment>
<comment type="similarity">
    <text evidence="1">Belongs to the bacterial ribosomal protein bS16 family.</text>
</comment>
<feature type="chain" id="PRO_0000276951" description="Small ribosomal subunit protein bS16c">
    <location>
        <begin position="1"/>
        <end position="88"/>
    </location>
</feature>
<feature type="sequence conflict" description="In Ref. 2; ABD47215." evidence="2" ref="2">
    <location>
        <begin position="14"/>
        <end position="17"/>
    </location>
</feature>
<name>RR16_LACSA</name>
<accession>Q332Z6</accession>
<accession>Q1KXN3</accession>
<evidence type="ECO:0000255" key="1">
    <source>
        <dbReference type="HAMAP-Rule" id="MF_00385"/>
    </source>
</evidence>
<evidence type="ECO:0000305" key="2"/>
<gene>
    <name evidence="1" type="primary">rps16</name>
</gene>
<protein>
    <recommendedName>
        <fullName evidence="1">Small ribosomal subunit protein bS16c</fullName>
    </recommendedName>
    <alternativeName>
        <fullName evidence="2">30S ribosomal protein S16, chloroplastic</fullName>
    </alternativeName>
</protein>